<keyword id="KW-0963">Cytoplasm</keyword>
<keyword id="KW-0597">Phosphoprotein</keyword>
<reference key="1">
    <citation type="journal article" date="2007" name="Genome Biol.">
        <title>Characterization and modeling of the Haemophilus influenzae core and supragenomes based on the complete genomic sequences of Rd and 12 clinical nontypeable strains.</title>
        <authorList>
            <person name="Hogg J.S."/>
            <person name="Hu F.Z."/>
            <person name="Janto B."/>
            <person name="Boissy R."/>
            <person name="Hayes J."/>
            <person name="Keefe R."/>
            <person name="Post J.C."/>
            <person name="Ehrlich G.D."/>
        </authorList>
    </citation>
    <scope>NUCLEOTIDE SEQUENCE [LARGE SCALE GENOMIC DNA]</scope>
    <source>
        <strain>PittGG</strain>
    </source>
</reference>
<sequence length="95" mass="10244">MKITKVAVAGTLESSDVQVRVQPFDSLDIEINSSVAKQFGEQIEATVREVLAKLGITAAQVIVEDKGALDCVLQARVKAAAMRATDEMINWEAVL</sequence>
<name>CITD_HAEIG</name>
<feature type="chain" id="PRO_1000047071" description="Citrate lyase acyl carrier protein">
    <location>
        <begin position="1"/>
        <end position="95"/>
    </location>
</feature>
<feature type="modified residue" description="O-(phosphoribosyl dephospho-coenzyme A)serine" evidence="1">
    <location>
        <position position="14"/>
    </location>
</feature>
<accession>A5UFJ6</accession>
<protein>
    <recommendedName>
        <fullName evidence="1">Citrate lyase acyl carrier protein</fullName>
    </recommendedName>
    <alternativeName>
        <fullName evidence="1">Citrate lyase gamma chain</fullName>
    </alternativeName>
</protein>
<comment type="function">
    <text evidence="1">Covalent carrier of the coenzyme of citrate lyase.</text>
</comment>
<comment type="subunit">
    <text evidence="1">Oligomer with a subunit composition of (alpha,beta,gamma)6.</text>
</comment>
<comment type="subcellular location">
    <subcellularLocation>
        <location evidence="1">Cytoplasm</location>
    </subcellularLocation>
</comment>
<comment type="similarity">
    <text evidence="1">Belongs to the CitD family.</text>
</comment>
<dbReference type="EMBL" id="CP000672">
    <property type="protein sequence ID" value="ABQ99551.1"/>
    <property type="molecule type" value="Genomic_DNA"/>
</dbReference>
<dbReference type="SMR" id="A5UFJ6"/>
<dbReference type="KEGG" id="hiq:CGSHiGG_02605"/>
<dbReference type="HOGENOM" id="CLU_158489_0_0_6"/>
<dbReference type="Proteomes" id="UP000001990">
    <property type="component" value="Chromosome"/>
</dbReference>
<dbReference type="GO" id="GO:0005737">
    <property type="term" value="C:cytoplasm"/>
    <property type="evidence" value="ECO:0007669"/>
    <property type="project" value="UniProtKB-SubCell"/>
</dbReference>
<dbReference type="HAMAP" id="MF_00805">
    <property type="entry name" value="CitD"/>
    <property type="match status" value="1"/>
</dbReference>
<dbReference type="InterPro" id="IPR006495">
    <property type="entry name" value="CitD"/>
</dbReference>
<dbReference type="InterPro" id="IPR023439">
    <property type="entry name" value="Mal_deCO2ase/Cit_lyase_ACP"/>
</dbReference>
<dbReference type="NCBIfam" id="TIGR01608">
    <property type="entry name" value="citD"/>
    <property type="match status" value="1"/>
</dbReference>
<dbReference type="NCBIfam" id="NF009726">
    <property type="entry name" value="PRK13253.1"/>
    <property type="match status" value="1"/>
</dbReference>
<dbReference type="Pfam" id="PF06857">
    <property type="entry name" value="ACP"/>
    <property type="match status" value="1"/>
</dbReference>
<dbReference type="PIRSF" id="PIRSF002736">
    <property type="entry name" value="Citrt_lyas_gamma"/>
    <property type="match status" value="1"/>
</dbReference>
<proteinExistence type="inferred from homology"/>
<gene>
    <name evidence="1" type="primary">citD</name>
    <name type="ordered locus">CGSHiGG_02605</name>
</gene>
<organism>
    <name type="scientific">Haemophilus influenzae (strain PittGG)</name>
    <dbReference type="NCBI Taxonomy" id="374931"/>
    <lineage>
        <taxon>Bacteria</taxon>
        <taxon>Pseudomonadati</taxon>
        <taxon>Pseudomonadota</taxon>
        <taxon>Gammaproteobacteria</taxon>
        <taxon>Pasteurellales</taxon>
        <taxon>Pasteurellaceae</taxon>
        <taxon>Haemophilus</taxon>
    </lineage>
</organism>
<evidence type="ECO:0000255" key="1">
    <source>
        <dbReference type="HAMAP-Rule" id="MF_00805"/>
    </source>
</evidence>